<name>THIE_LARHH</name>
<gene>
    <name evidence="1" type="primary">thiE</name>
    <name type="ordered locus">LHK_02661</name>
</gene>
<proteinExistence type="inferred from homology"/>
<dbReference type="EC" id="2.5.1.3" evidence="1"/>
<dbReference type="EMBL" id="CP001154">
    <property type="protein sequence ID" value="ACO75642.1"/>
    <property type="molecule type" value="Genomic_DNA"/>
</dbReference>
<dbReference type="RefSeq" id="WP_012698106.1">
    <property type="nucleotide sequence ID" value="NC_012559.1"/>
</dbReference>
<dbReference type="SMR" id="C1DCM3"/>
<dbReference type="STRING" id="557598.LHK_02661"/>
<dbReference type="KEGG" id="lhk:LHK_02661"/>
<dbReference type="eggNOG" id="COG0352">
    <property type="taxonomic scope" value="Bacteria"/>
</dbReference>
<dbReference type="HOGENOM" id="CLU_018272_3_2_4"/>
<dbReference type="UniPathway" id="UPA00060">
    <property type="reaction ID" value="UER00141"/>
</dbReference>
<dbReference type="Proteomes" id="UP000002010">
    <property type="component" value="Chromosome"/>
</dbReference>
<dbReference type="GO" id="GO:0005737">
    <property type="term" value="C:cytoplasm"/>
    <property type="evidence" value="ECO:0007669"/>
    <property type="project" value="TreeGrafter"/>
</dbReference>
<dbReference type="GO" id="GO:0000287">
    <property type="term" value="F:magnesium ion binding"/>
    <property type="evidence" value="ECO:0007669"/>
    <property type="project" value="UniProtKB-UniRule"/>
</dbReference>
<dbReference type="GO" id="GO:0004789">
    <property type="term" value="F:thiamine-phosphate diphosphorylase activity"/>
    <property type="evidence" value="ECO:0007669"/>
    <property type="project" value="UniProtKB-UniRule"/>
</dbReference>
<dbReference type="GO" id="GO:0009228">
    <property type="term" value="P:thiamine biosynthetic process"/>
    <property type="evidence" value="ECO:0007669"/>
    <property type="project" value="UniProtKB-KW"/>
</dbReference>
<dbReference type="GO" id="GO:0009229">
    <property type="term" value="P:thiamine diphosphate biosynthetic process"/>
    <property type="evidence" value="ECO:0007669"/>
    <property type="project" value="UniProtKB-UniRule"/>
</dbReference>
<dbReference type="CDD" id="cd00564">
    <property type="entry name" value="TMP_TenI"/>
    <property type="match status" value="1"/>
</dbReference>
<dbReference type="FunFam" id="3.20.20.70:FF:000096">
    <property type="entry name" value="Thiamine-phosphate synthase"/>
    <property type="match status" value="1"/>
</dbReference>
<dbReference type="Gene3D" id="3.20.20.70">
    <property type="entry name" value="Aldolase class I"/>
    <property type="match status" value="1"/>
</dbReference>
<dbReference type="HAMAP" id="MF_00097">
    <property type="entry name" value="TMP_synthase"/>
    <property type="match status" value="1"/>
</dbReference>
<dbReference type="InterPro" id="IPR013785">
    <property type="entry name" value="Aldolase_TIM"/>
</dbReference>
<dbReference type="InterPro" id="IPR036206">
    <property type="entry name" value="ThiamineP_synth_sf"/>
</dbReference>
<dbReference type="InterPro" id="IPR022998">
    <property type="entry name" value="ThiamineP_synth_TenI"/>
</dbReference>
<dbReference type="InterPro" id="IPR034291">
    <property type="entry name" value="TMP_synthase"/>
</dbReference>
<dbReference type="NCBIfam" id="TIGR00693">
    <property type="entry name" value="thiE"/>
    <property type="match status" value="1"/>
</dbReference>
<dbReference type="PANTHER" id="PTHR20857">
    <property type="entry name" value="THIAMINE-PHOSPHATE PYROPHOSPHORYLASE"/>
    <property type="match status" value="1"/>
</dbReference>
<dbReference type="PANTHER" id="PTHR20857:SF15">
    <property type="entry name" value="THIAMINE-PHOSPHATE SYNTHASE"/>
    <property type="match status" value="1"/>
</dbReference>
<dbReference type="Pfam" id="PF02581">
    <property type="entry name" value="TMP-TENI"/>
    <property type="match status" value="1"/>
</dbReference>
<dbReference type="SUPFAM" id="SSF51391">
    <property type="entry name" value="Thiamin phosphate synthase"/>
    <property type="match status" value="1"/>
</dbReference>
<evidence type="ECO:0000255" key="1">
    <source>
        <dbReference type="HAMAP-Rule" id="MF_00097"/>
    </source>
</evidence>
<keyword id="KW-0460">Magnesium</keyword>
<keyword id="KW-0479">Metal-binding</keyword>
<keyword id="KW-1185">Reference proteome</keyword>
<keyword id="KW-0784">Thiamine biosynthesis</keyword>
<keyword id="KW-0808">Transferase</keyword>
<accession>C1DCM3</accession>
<protein>
    <recommendedName>
        <fullName evidence="1">Thiamine-phosphate synthase</fullName>
        <shortName evidence="1">TP synthase</shortName>
        <shortName evidence="1">TPS</shortName>
        <ecNumber evidence="1">2.5.1.3</ecNumber>
    </recommendedName>
    <alternativeName>
        <fullName evidence="1">Thiamine-phosphate pyrophosphorylase</fullName>
        <shortName evidence="1">TMP pyrophosphorylase</shortName>
        <shortName evidence="1">TMP-PPase</shortName>
    </alternativeName>
</protein>
<reference key="1">
    <citation type="journal article" date="2009" name="PLoS Genet.">
        <title>The complete genome and proteome of Laribacter hongkongensis reveal potential mechanisms for adaptations to different temperatures and habitats.</title>
        <authorList>
            <person name="Woo P.C.Y."/>
            <person name="Lau S.K.P."/>
            <person name="Tse H."/>
            <person name="Teng J.L.L."/>
            <person name="Curreem S.O."/>
            <person name="Tsang A.K.L."/>
            <person name="Fan R.Y.Y."/>
            <person name="Wong G.K.M."/>
            <person name="Huang Y."/>
            <person name="Loman N.J."/>
            <person name="Snyder L.A.S."/>
            <person name="Cai J.J."/>
            <person name="Huang J.-D."/>
            <person name="Mak W."/>
            <person name="Pallen M.J."/>
            <person name="Lok S."/>
            <person name="Yuen K.-Y."/>
        </authorList>
    </citation>
    <scope>NUCLEOTIDE SEQUENCE [LARGE SCALE GENOMIC DNA]</scope>
    <source>
        <strain>HLHK9</strain>
    </source>
</reference>
<feature type="chain" id="PRO_1000198080" description="Thiamine-phosphate synthase">
    <location>
        <begin position="1"/>
        <end position="211"/>
    </location>
</feature>
<feature type="binding site" evidence="1">
    <location>
        <begin position="40"/>
        <end position="42"/>
    </location>
    <ligand>
        <name>4-amino-2-methyl-5-(diphosphooxymethyl)pyrimidine</name>
        <dbReference type="ChEBI" id="CHEBI:57841"/>
    </ligand>
</feature>
<feature type="binding site" evidence="1">
    <location>
        <position position="72"/>
    </location>
    <ligand>
        <name>4-amino-2-methyl-5-(diphosphooxymethyl)pyrimidine</name>
        <dbReference type="ChEBI" id="CHEBI:57841"/>
    </ligand>
</feature>
<feature type="binding site" evidence="1">
    <location>
        <position position="73"/>
    </location>
    <ligand>
        <name>Mg(2+)</name>
        <dbReference type="ChEBI" id="CHEBI:18420"/>
    </ligand>
</feature>
<feature type="binding site" evidence="1">
    <location>
        <position position="92"/>
    </location>
    <ligand>
        <name>Mg(2+)</name>
        <dbReference type="ChEBI" id="CHEBI:18420"/>
    </ligand>
</feature>
<feature type="binding site" evidence="1">
    <location>
        <position position="111"/>
    </location>
    <ligand>
        <name>4-amino-2-methyl-5-(diphosphooxymethyl)pyrimidine</name>
        <dbReference type="ChEBI" id="CHEBI:57841"/>
    </ligand>
</feature>
<feature type="binding site" evidence="1">
    <location>
        <begin position="136"/>
        <end position="138"/>
    </location>
    <ligand>
        <name>2-[(2R,5Z)-2-carboxy-4-methylthiazol-5(2H)-ylidene]ethyl phosphate</name>
        <dbReference type="ChEBI" id="CHEBI:62899"/>
    </ligand>
</feature>
<feature type="binding site" evidence="1">
    <location>
        <position position="139"/>
    </location>
    <ligand>
        <name>4-amino-2-methyl-5-(diphosphooxymethyl)pyrimidine</name>
        <dbReference type="ChEBI" id="CHEBI:57841"/>
    </ligand>
</feature>
<feature type="binding site" evidence="1">
    <location>
        <position position="167"/>
    </location>
    <ligand>
        <name>2-[(2R,5Z)-2-carboxy-4-methylthiazol-5(2H)-ylidene]ethyl phosphate</name>
        <dbReference type="ChEBI" id="CHEBI:62899"/>
    </ligand>
</feature>
<feature type="binding site" evidence="1">
    <location>
        <begin position="187"/>
        <end position="188"/>
    </location>
    <ligand>
        <name>2-[(2R,5Z)-2-carboxy-4-methylthiazol-5(2H)-ylidene]ethyl phosphate</name>
        <dbReference type="ChEBI" id="CHEBI:62899"/>
    </ligand>
</feature>
<sequence>MKKMIDYSVYLVLDPELCGGLDGMLRVTEAAMAGGAGVVQLRAPQWKKRQWLDAARALQPLCRQGGAVFVVNDQVDVALAVGADGVHVGQQDLPVAVVRELMGPQALIGLSVNHAGQLAAVPSEADYLGLGPVFATSTKKDAAPVLGLAQLAGLAAATSLPTVGIGGIAPANAGAVFAAGVDGVAVVSAICTAADPAAVTRELYALKGHTA</sequence>
<comment type="function">
    <text evidence="1">Condenses 4-methyl-5-(beta-hydroxyethyl)thiazole monophosphate (THZ-P) and 2-methyl-4-amino-5-hydroxymethyl pyrimidine pyrophosphate (HMP-PP) to form thiamine monophosphate (TMP).</text>
</comment>
<comment type="catalytic activity">
    <reaction evidence="1">
        <text>2-[(2R,5Z)-2-carboxy-4-methylthiazol-5(2H)-ylidene]ethyl phosphate + 4-amino-2-methyl-5-(diphosphooxymethyl)pyrimidine + 2 H(+) = thiamine phosphate + CO2 + diphosphate</text>
        <dbReference type="Rhea" id="RHEA:47844"/>
        <dbReference type="ChEBI" id="CHEBI:15378"/>
        <dbReference type="ChEBI" id="CHEBI:16526"/>
        <dbReference type="ChEBI" id="CHEBI:33019"/>
        <dbReference type="ChEBI" id="CHEBI:37575"/>
        <dbReference type="ChEBI" id="CHEBI:57841"/>
        <dbReference type="ChEBI" id="CHEBI:62899"/>
        <dbReference type="EC" id="2.5.1.3"/>
    </reaction>
</comment>
<comment type="catalytic activity">
    <reaction evidence="1">
        <text>2-(2-carboxy-4-methylthiazol-5-yl)ethyl phosphate + 4-amino-2-methyl-5-(diphosphooxymethyl)pyrimidine + 2 H(+) = thiamine phosphate + CO2 + diphosphate</text>
        <dbReference type="Rhea" id="RHEA:47848"/>
        <dbReference type="ChEBI" id="CHEBI:15378"/>
        <dbReference type="ChEBI" id="CHEBI:16526"/>
        <dbReference type="ChEBI" id="CHEBI:33019"/>
        <dbReference type="ChEBI" id="CHEBI:37575"/>
        <dbReference type="ChEBI" id="CHEBI:57841"/>
        <dbReference type="ChEBI" id="CHEBI:62890"/>
        <dbReference type="EC" id="2.5.1.3"/>
    </reaction>
</comment>
<comment type="catalytic activity">
    <reaction evidence="1">
        <text>4-methyl-5-(2-phosphooxyethyl)-thiazole + 4-amino-2-methyl-5-(diphosphooxymethyl)pyrimidine + H(+) = thiamine phosphate + diphosphate</text>
        <dbReference type="Rhea" id="RHEA:22328"/>
        <dbReference type="ChEBI" id="CHEBI:15378"/>
        <dbReference type="ChEBI" id="CHEBI:33019"/>
        <dbReference type="ChEBI" id="CHEBI:37575"/>
        <dbReference type="ChEBI" id="CHEBI:57841"/>
        <dbReference type="ChEBI" id="CHEBI:58296"/>
        <dbReference type="EC" id="2.5.1.3"/>
    </reaction>
</comment>
<comment type="cofactor">
    <cofactor evidence="1">
        <name>Mg(2+)</name>
        <dbReference type="ChEBI" id="CHEBI:18420"/>
    </cofactor>
    <text evidence="1">Binds 1 Mg(2+) ion per subunit.</text>
</comment>
<comment type="pathway">
    <text evidence="1">Cofactor biosynthesis; thiamine diphosphate biosynthesis; thiamine phosphate from 4-amino-2-methyl-5-diphosphomethylpyrimidine and 4-methyl-5-(2-phosphoethyl)-thiazole: step 1/1.</text>
</comment>
<comment type="similarity">
    <text evidence="1">Belongs to the thiamine-phosphate synthase family.</text>
</comment>
<organism>
    <name type="scientific">Laribacter hongkongensis (strain HLHK9)</name>
    <dbReference type="NCBI Taxonomy" id="557598"/>
    <lineage>
        <taxon>Bacteria</taxon>
        <taxon>Pseudomonadati</taxon>
        <taxon>Pseudomonadota</taxon>
        <taxon>Betaproteobacteria</taxon>
        <taxon>Neisseriales</taxon>
        <taxon>Aquaspirillaceae</taxon>
        <taxon>Laribacter</taxon>
    </lineage>
</organism>